<name>OREX_HUMAN</name>
<comment type="function">
    <text evidence="1">Neuropeptides that play a significant role in the regulation of food intake and sleep-wakefulness, possibly by coordinating the complex behavioral and physiologic responses of these complementary homeostatic functions. A broader role in the homeostatic regulation of energy metabolism, autonomic function, hormonal balance and the regulation of body fluids, is also suggested.</text>
</comment>
<comment type="function">
    <molecule>Orexin-A</molecule>
    <text evidence="1">Binds to orexin receptors HCRTR1/OX1R and HCRTR2/OX2R with a high affinity (By similarity). Stimulates food intake (By similarity). Modulates pituitary luteinizing hormone secretion in an ovarian steroid-dependent manner (By similarity).</text>
</comment>
<comment type="function">
    <molecule>Orexin-B</molecule>
    <text evidence="1">Binds to orexin receptor HCRTR2/OX2R only (By similarity). Stimulates food intake (By similarity). Modulates pituitary luteinizing hormone secretion in an ovarian steroid-dependent manner (By similarity).</text>
</comment>
<comment type="subcellular location">
    <subcellularLocation>
        <location evidence="1">Rough endoplasmic reticulum</location>
    </subcellularLocation>
    <subcellularLocation>
        <location evidence="1">Cytoplasmic vesicle</location>
    </subcellularLocation>
    <subcellularLocation>
        <location evidence="1">Synapse</location>
    </subcellularLocation>
    <text evidence="1">Associated with perikaryal rough endoplasmic reticulum as well as cytoplasmic large granular vesicles at synapses.</text>
</comment>
<comment type="tissue specificity">
    <text evidence="5">Abundantly expressed in subthalamic nucleus but undetectable in other brain regions tested (hypothalamus was not tested) and in heart, placenta, lung, liver, skeletal muscle, kidney and pancreas.</text>
</comment>
<comment type="PTM">
    <text evidence="8">Specific enzymatic cleavages at paired basic residues yield the different active peptides.</text>
</comment>
<comment type="disease" evidence="2">
    <disease id="DI-02029">
        <name>Narcolepsy 1</name>
        <acronym>NRCLP1</acronym>
        <description>Neurological disabling sleep disorder, characterized by excessive daytime sleepiness, sleep fragmentation, symptoms of abnormal rapid-eye-movement (REM) sleep, cataplexy, hypnagogic hallucinations, and sleep paralysis. Cataplexy is a sudden loss of muscle tone triggered by emotions, which is the most valuable clinical feature used to diagnose narcolepsy. Human narcolepsy is primarily a sporadically occurring disorder but familial clustering has been observed.</description>
        <dbReference type="MIM" id="161400"/>
    </disease>
    <text>The disease is caused by variants affecting the gene represented in this entry. Human narcolepsy is associated with a deficient orexin system. Orexins are absent and/or greatly diminished in the brain and cerebrospinal fluid (CSF) of most narcoleptic patients.</text>
</comment>
<comment type="similarity">
    <text evidence="9">Belongs to the orexin family.</text>
</comment>
<comment type="online information" name="Protein Spotlight">
    <link uri="https://www.proteinspotlight.org/back_issues/015"/>
    <text>Qui dort dine - Issue 15 of October 2001</text>
</comment>
<feature type="signal peptide" evidence="1">
    <location>
        <begin position="1"/>
        <end position="33"/>
    </location>
</feature>
<feature type="peptide" id="PRO_0000020261" description="Orexin-A" evidence="1">
    <location>
        <begin position="34"/>
        <end position="66"/>
    </location>
</feature>
<feature type="peptide" id="PRO_0000020262" description="Orexin-B" evidence="1">
    <location>
        <begin position="70"/>
        <end position="97"/>
    </location>
</feature>
<feature type="propeptide" id="PRO_0000020263" description="Removed in mature form" evidence="1">
    <location>
        <begin position="98"/>
        <end position="131"/>
    </location>
</feature>
<feature type="modified residue" description="Pyrrolidone carboxylic acid" evidence="1">
    <location>
        <position position="34"/>
    </location>
</feature>
<feature type="modified residue" description="Leucine amide" evidence="1">
    <location>
        <position position="66"/>
    </location>
</feature>
<feature type="modified residue" description="Methionine amide" evidence="1">
    <location>
        <position position="97"/>
    </location>
</feature>
<feature type="disulfide bond" evidence="3 4 11 12">
    <location>
        <begin position="39"/>
        <end position="45"/>
    </location>
</feature>
<feature type="disulfide bond" evidence="3 4 11 12">
    <location>
        <begin position="40"/>
        <end position="47"/>
    </location>
</feature>
<feature type="sequence variant" id="VAR_011633" description="In NRCLP1; early-onset; impaired trafficking and processing; dbSNP:rs104894574." evidence="2">
    <original>L</original>
    <variation>R</variation>
    <location>
        <position position="16"/>
    </location>
</feature>
<feature type="turn" evidence="15">
    <location>
        <begin position="40"/>
        <end position="42"/>
    </location>
</feature>
<feature type="strand" evidence="15">
    <location>
        <begin position="43"/>
        <end position="45"/>
    </location>
</feature>
<feature type="helix" evidence="15">
    <location>
        <begin position="47"/>
        <end position="54"/>
    </location>
</feature>
<feature type="helix" evidence="15">
    <location>
        <begin position="58"/>
        <end position="64"/>
    </location>
</feature>
<feature type="helix" evidence="14">
    <location>
        <begin position="76"/>
        <end position="86"/>
    </location>
</feature>
<feature type="turn" evidence="14">
    <location>
        <begin position="87"/>
        <end position="89"/>
    </location>
</feature>
<feature type="helix" evidence="14">
    <location>
        <begin position="91"/>
        <end position="95"/>
    </location>
</feature>
<organism>
    <name type="scientific">Homo sapiens</name>
    <name type="common">Human</name>
    <dbReference type="NCBI Taxonomy" id="9606"/>
    <lineage>
        <taxon>Eukaryota</taxon>
        <taxon>Metazoa</taxon>
        <taxon>Chordata</taxon>
        <taxon>Craniata</taxon>
        <taxon>Vertebrata</taxon>
        <taxon>Euteleostomi</taxon>
        <taxon>Mammalia</taxon>
        <taxon>Eutheria</taxon>
        <taxon>Euarchontoglires</taxon>
        <taxon>Primates</taxon>
        <taxon>Haplorrhini</taxon>
        <taxon>Catarrhini</taxon>
        <taxon>Hominidae</taxon>
        <taxon>Homo</taxon>
    </lineage>
</organism>
<gene>
    <name evidence="10" type="primary">HCRT</name>
    <name type="synonym">OX</name>
    <name type="synonym">PPORX</name>
    <name type="synonym">PPOX</name>
</gene>
<proteinExistence type="evidence at protein level"/>
<reference key="1">
    <citation type="journal article" date="1998" name="Cell">
        <title>Orexins and orexin receptors: a family of hypothalamic neuropeptides and G protein-coupled receptors that regulate feeding behavior.</title>
        <authorList>
            <person name="Sakurai T."/>
            <person name="Amemiya A."/>
            <person name="Ishii M."/>
            <person name="Matsuzaki I."/>
            <person name="Chemelli R.M."/>
            <person name="Tanaka H."/>
            <person name="Williams S.C."/>
            <person name="Richardson J.A."/>
            <person name="Kozlowski G.P."/>
            <person name="Wilson S."/>
            <person name="Arch J.R.S."/>
            <person name="Buckingham R.E."/>
            <person name="Haynes A.C."/>
            <person name="Carr S.A."/>
            <person name="Annan R.S."/>
            <person name="McNulty D.E."/>
            <person name="Liu W.-S."/>
            <person name="Terrett J.A."/>
            <person name="Elshourbagy N.A."/>
            <person name="Bergsma D.J."/>
            <person name="Yanagisawa M."/>
        </authorList>
    </citation>
    <scope>NUCLEOTIDE SEQUENCE [MRNA]</scope>
    <scope>TISSUE SPECIFICITY</scope>
</reference>
<reference key="2">
    <citation type="journal article" date="1999" name="J. Biol. Chem.">
        <title>Structure and function of human prepro-orexin gene.</title>
        <authorList>
            <person name="Sakurai T."/>
            <person name="Moriguchi T."/>
            <person name="Furuya K."/>
            <person name="Kajiwara N."/>
            <person name="Nakamura T."/>
            <person name="Yanagisawa M."/>
            <person name="Goto K."/>
        </authorList>
    </citation>
    <scope>NUCLEOTIDE SEQUENCE [GENOMIC DNA]</scope>
</reference>
<reference key="3">
    <citation type="journal article" date="1999" name="Eur. J. Biochem.">
        <title>Solution structure of a new hypothalamic neuropeptide, human hypocretin-2/orexin-B.</title>
        <authorList>
            <person name="Lee J.-H."/>
            <person name="Bang E."/>
            <person name="Chae K.-J."/>
            <person name="Kim J.-Y."/>
            <person name="Lee D.W."/>
            <person name="Lee W."/>
        </authorList>
    </citation>
    <scope>STRUCTURE BY NMR OF 71-97</scope>
</reference>
<reference key="4">
    <citation type="journal article" date="2001" name="Bioessays">
        <title>Hypocretin/orexin, sleep and narcolepsy.</title>
        <authorList>
            <person name="Hungs M."/>
            <person name="Mignot E."/>
        </authorList>
    </citation>
    <scope>REVIEW</scope>
</reference>
<reference key="5">
    <citation type="journal article" date="2001" name="Annu. Rev. Neurosci.">
        <title>To eat or to sleep? Orexin in the regulation of feeding and wakefulness.</title>
        <authorList>
            <person name="Willie J.T."/>
            <person name="Chemelli R.M."/>
            <person name="Sinton C.M."/>
            <person name="Yanagisawa M."/>
        </authorList>
    </citation>
    <scope>REVIEW</scope>
</reference>
<reference key="6">
    <citation type="journal article" date="2004" name="J. Biochem. Mol. Biol.">
        <title>Solution structure of human orexin-A: regulator of appetite and wakefulness.</title>
        <authorList>
            <person name="Kim H.Y."/>
            <person name="Hong E."/>
            <person name="Kim J.I."/>
            <person name="Lee W."/>
        </authorList>
    </citation>
    <scope>STRUCTURE BY NMR OF 34-66</scope>
    <scope>DISULFIDE BONDS</scope>
</reference>
<reference key="7">
    <citation type="journal article" date="2004" name="Proc. Natl. Acad. Sci. U.S.A.">
        <title>Crystal structure of HLA-DQ0602 that protects against type 1 diabetes and confers strong susceptibility to narcolepsy.</title>
        <authorList>
            <person name="Siebold C."/>
            <person name="Hansen B.E."/>
            <person name="Wyer J.R."/>
            <person name="Harlos K."/>
            <person name="Esnouf R.E."/>
            <person name="Svejgaard A."/>
            <person name="Bell J.I."/>
            <person name="Strominger J.L."/>
            <person name="Jones E.Y."/>
            <person name="Fugger L."/>
        </authorList>
    </citation>
    <scope>X-RAY CRYSTALLOGRAPHY (1.8 ANGSTROMS) OF 1-12 IN COMPLEX OF HLA-DQA1/HLA-DQB1 HETERODIMER (HLA-DQ0602)</scope>
</reference>
<reference key="8">
    <citation type="journal article" date="2006" name="J. Pept. Sci.">
        <title>Orexin-A is composed of a highly conserved C-terminal and a specific, hydrophilic N-terminal region, revealing the structural basis of specific recognition by the orexin-1 receptor.</title>
        <authorList>
            <person name="Takai T."/>
            <person name="Takaya T."/>
            <person name="Nakano M."/>
            <person name="Akutsu H."/>
            <person name="Nakagawa A."/>
            <person name="Aimoto S."/>
            <person name="Nagai K."/>
            <person name="Ikegami T."/>
        </authorList>
    </citation>
    <scope>STRUCTURE BY NMR OF 35-66</scope>
    <scope>DISULFIDE BONDS</scope>
</reference>
<reference evidence="13" key="9">
    <citation type="journal article" date="2021" name="Nat. Commun.">
        <title>Structures of active-state orexin receptor 2 rationalize peptide and small-molecule agonist recognition and receptor activation.</title>
        <authorList>
            <person name="Hong C."/>
            <person name="Byrne N.J."/>
            <person name="Zamlynny B."/>
            <person name="Tummala S."/>
            <person name="Xiao L."/>
            <person name="Shipman J.M."/>
            <person name="Partridge A.T."/>
            <person name="Minnick C."/>
            <person name="Breslin M.J."/>
            <person name="Rudd M.T."/>
            <person name="Stachel S.J."/>
            <person name="Rada V.L."/>
            <person name="Kern J.C."/>
            <person name="Armacost K.A."/>
            <person name="Hollingsworth S.A."/>
            <person name="O'Brien J.A."/>
            <person name="Hall D.L."/>
            <person name="McDonald T.P."/>
            <person name="Strickland C."/>
            <person name="Brooun A."/>
            <person name="Soisson S.M."/>
            <person name="Hollenstein K."/>
        </authorList>
    </citation>
    <scope>STRUCTURE BY ELECTRON MICROSCOPY (3.20 ANGSTROMS) OF 70-97 IN COMPLEX WITH HCRTR2 3-389</scope>
</reference>
<reference key="10">
    <citation type="journal article" date="2000" name="Nat. Med.">
        <title>A mutation in a case of early onset narcolepsy and a generalized absence of hypocretin peptides in human narcoleptic brains.</title>
        <authorList>
            <person name="Peyron C."/>
            <person name="Faraco J."/>
            <person name="Rogers W."/>
            <person name="Ripley B."/>
            <person name="Overeem S."/>
            <person name="Charnay Y."/>
            <person name="Nevsimalova S."/>
            <person name="Aldrich M."/>
            <person name="Reynolds D."/>
            <person name="Albin R."/>
            <person name="Li R."/>
            <person name="Hungs M."/>
            <person name="Pedrazzoli M."/>
            <person name="Padigaru M."/>
            <person name="Kucherlapati M."/>
            <person name="Fan J."/>
            <person name="Maki R."/>
            <person name="Lammers G.J."/>
            <person name="Bouras C."/>
            <person name="Kucherlapati R."/>
            <person name="Nishino S."/>
            <person name="Mignot E."/>
        </authorList>
    </citation>
    <scope>CHARACTERIZATION OF VARIANT NRCLP1 ARG-16</scope>
    <scope>INVOLVEMENT IN NRCLP1</scope>
</reference>
<keyword id="KW-0002">3D-structure</keyword>
<keyword id="KW-0027">Amidation</keyword>
<keyword id="KW-0165">Cleavage on pair of basic residues</keyword>
<keyword id="KW-0968">Cytoplasmic vesicle</keyword>
<keyword id="KW-0225">Disease variant</keyword>
<keyword id="KW-1015">Disulfide bond</keyword>
<keyword id="KW-0256">Endoplasmic reticulum</keyword>
<keyword id="KW-0527">Neuropeptide</keyword>
<keyword id="KW-1267">Proteomics identification</keyword>
<keyword id="KW-0873">Pyrrolidone carboxylic acid</keyword>
<keyword id="KW-1185">Reference proteome</keyword>
<keyword id="KW-0732">Signal</keyword>
<keyword id="KW-0770">Synapse</keyword>
<dbReference type="EMBL" id="AF041240">
    <property type="protein sequence ID" value="AAC39600.1"/>
    <property type="molecule type" value="mRNA"/>
</dbReference>
<dbReference type="EMBL" id="AF118885">
    <property type="protein sequence ID" value="AAD24459.1"/>
    <property type="molecule type" value="Genomic_DNA"/>
</dbReference>
<dbReference type="CCDS" id="CCDS11421.1"/>
<dbReference type="RefSeq" id="NP_001515.1">
    <property type="nucleotide sequence ID" value="NM_001524.1"/>
</dbReference>
<dbReference type="PDB" id="1CQ0">
    <property type="method" value="NMR"/>
    <property type="chains" value="A=71-97"/>
</dbReference>
<dbReference type="PDB" id="1R02">
    <property type="method" value="NMR"/>
    <property type="chains" value="A=34-66"/>
</dbReference>
<dbReference type="PDB" id="1UVQ">
    <property type="method" value="X-ray"/>
    <property type="resolution" value="1.80 A"/>
    <property type="chains" value="C=1-12"/>
</dbReference>
<dbReference type="PDB" id="1WSO">
    <property type="method" value="NMR"/>
    <property type="chains" value="A=34-66"/>
</dbReference>
<dbReference type="PDB" id="7L1U">
    <property type="method" value="EM"/>
    <property type="resolution" value="3.20 A"/>
    <property type="chains" value="L=70-97"/>
</dbReference>
<dbReference type="PDBsum" id="1CQ0"/>
<dbReference type="PDBsum" id="1R02"/>
<dbReference type="PDBsum" id="1UVQ"/>
<dbReference type="PDBsum" id="1WSO"/>
<dbReference type="PDBsum" id="7L1U"/>
<dbReference type="EMDB" id="EMD-23118"/>
<dbReference type="SMR" id="O43612"/>
<dbReference type="BioGRID" id="109310">
    <property type="interactions" value="15"/>
</dbReference>
<dbReference type="FunCoup" id="O43612">
    <property type="interactions" value="372"/>
</dbReference>
<dbReference type="IntAct" id="O43612">
    <property type="interactions" value="3"/>
</dbReference>
<dbReference type="STRING" id="9606.ENSP00000293330"/>
<dbReference type="DrugBank" id="DB03088">
    <property type="generic name" value="Pidolic acid"/>
</dbReference>
<dbReference type="iPTMnet" id="O43612"/>
<dbReference type="SwissPalm" id="O43612"/>
<dbReference type="BioMuta" id="HCRT"/>
<dbReference type="MassIVE" id="O43612"/>
<dbReference type="PaxDb" id="9606-ENSP00000293330"/>
<dbReference type="PeptideAtlas" id="O43612"/>
<dbReference type="Antibodypedia" id="3468">
    <property type="antibodies" value="345 antibodies from 34 providers"/>
</dbReference>
<dbReference type="DNASU" id="3060"/>
<dbReference type="Ensembl" id="ENST00000293330.1">
    <property type="protein sequence ID" value="ENSP00000293330.1"/>
    <property type="gene ID" value="ENSG00000161610.1"/>
</dbReference>
<dbReference type="GeneID" id="3060"/>
<dbReference type="KEGG" id="hsa:3060"/>
<dbReference type="MANE-Select" id="ENST00000293330.1">
    <property type="protein sequence ID" value="ENSP00000293330.1"/>
    <property type="RefSeq nucleotide sequence ID" value="NM_001524.1"/>
    <property type="RefSeq protein sequence ID" value="NP_001515.1"/>
</dbReference>
<dbReference type="UCSC" id="uc002hzc.1">
    <property type="organism name" value="human"/>
</dbReference>
<dbReference type="AGR" id="HGNC:4847"/>
<dbReference type="CTD" id="3060"/>
<dbReference type="DisGeNET" id="3060"/>
<dbReference type="GeneCards" id="HCRT"/>
<dbReference type="HGNC" id="HGNC:4847">
    <property type="gene designation" value="HCRT"/>
</dbReference>
<dbReference type="HPA" id="ENSG00000161610">
    <property type="expression patterns" value="Tissue enriched (brain)"/>
</dbReference>
<dbReference type="MalaCards" id="HCRT"/>
<dbReference type="MIM" id="161400">
    <property type="type" value="phenotype"/>
</dbReference>
<dbReference type="MIM" id="602358">
    <property type="type" value="gene"/>
</dbReference>
<dbReference type="neXtProt" id="NX_O43612"/>
<dbReference type="OpenTargets" id="ENSG00000161610"/>
<dbReference type="Orphanet" id="2073">
    <property type="disease" value="Narcolepsy type 1"/>
</dbReference>
<dbReference type="Orphanet" id="83465">
    <property type="disease" value="Narcolepsy type 2"/>
</dbReference>
<dbReference type="PharmGKB" id="PA29221"/>
<dbReference type="VEuPathDB" id="HostDB:ENSG00000161610"/>
<dbReference type="eggNOG" id="ENOG502S83I">
    <property type="taxonomic scope" value="Eukaryota"/>
</dbReference>
<dbReference type="GeneTree" id="ENSGT00390000014272"/>
<dbReference type="HOGENOM" id="CLU_149027_1_0_1"/>
<dbReference type="InParanoid" id="O43612"/>
<dbReference type="OMA" id="HPCPGRR"/>
<dbReference type="OrthoDB" id="9379045at2759"/>
<dbReference type="PAN-GO" id="O43612">
    <property type="GO annotations" value="10 GO annotations based on evolutionary models"/>
</dbReference>
<dbReference type="PhylomeDB" id="O43612"/>
<dbReference type="TreeFam" id="TF330756"/>
<dbReference type="PathwayCommons" id="O43612"/>
<dbReference type="Reactome" id="R-HSA-389397">
    <property type="pathway name" value="Orexin and neuropeptides FF and QRFP bind to their respective receptors"/>
</dbReference>
<dbReference type="Reactome" id="R-HSA-416476">
    <property type="pathway name" value="G alpha (q) signalling events"/>
</dbReference>
<dbReference type="SignaLink" id="O43612"/>
<dbReference type="SIGNOR" id="O43612"/>
<dbReference type="BioGRID-ORCS" id="3060">
    <property type="hits" value="13 hits in 1144 CRISPR screens"/>
</dbReference>
<dbReference type="EvolutionaryTrace" id="O43612"/>
<dbReference type="GenomeRNAi" id="3060"/>
<dbReference type="Pharos" id="O43612">
    <property type="development level" value="Tbio"/>
</dbReference>
<dbReference type="PRO" id="PR:O43612"/>
<dbReference type="Proteomes" id="UP000005640">
    <property type="component" value="Chromosome 17"/>
</dbReference>
<dbReference type="RNAct" id="O43612">
    <property type="molecule type" value="protein"/>
</dbReference>
<dbReference type="Bgee" id="ENSG00000161610">
    <property type="expression patterns" value="Expressed in hypothalamus and 71 other cell types or tissues"/>
</dbReference>
<dbReference type="GO" id="GO:0005576">
    <property type="term" value="C:extracellular region"/>
    <property type="evidence" value="ECO:0000304"/>
    <property type="project" value="Reactome"/>
</dbReference>
<dbReference type="GO" id="GO:0099013">
    <property type="term" value="C:neuronal dense core vesicle lumen"/>
    <property type="evidence" value="ECO:0007669"/>
    <property type="project" value="Ensembl"/>
</dbReference>
<dbReference type="GO" id="GO:0048471">
    <property type="term" value="C:perinuclear region of cytoplasm"/>
    <property type="evidence" value="ECO:0000318"/>
    <property type="project" value="GO_Central"/>
</dbReference>
<dbReference type="GO" id="GO:0098794">
    <property type="term" value="C:postsynapse"/>
    <property type="evidence" value="ECO:0007669"/>
    <property type="project" value="GOC"/>
</dbReference>
<dbReference type="GO" id="GO:0005791">
    <property type="term" value="C:rough endoplasmic reticulum"/>
    <property type="evidence" value="ECO:0007669"/>
    <property type="project" value="UniProtKB-SubCell"/>
</dbReference>
<dbReference type="GO" id="GO:0008021">
    <property type="term" value="C:synaptic vesicle"/>
    <property type="evidence" value="ECO:0000304"/>
    <property type="project" value="ProtInc"/>
</dbReference>
<dbReference type="GO" id="GO:0005184">
    <property type="term" value="F:neuropeptide hormone activity"/>
    <property type="evidence" value="ECO:0000318"/>
    <property type="project" value="GO_Central"/>
</dbReference>
<dbReference type="GO" id="GO:0031771">
    <property type="term" value="F:type 1 orexin receptor binding"/>
    <property type="evidence" value="ECO:0000318"/>
    <property type="project" value="GO_Central"/>
</dbReference>
<dbReference type="GO" id="GO:0031772">
    <property type="term" value="F:type 2 orexin receptor binding"/>
    <property type="evidence" value="ECO:0000318"/>
    <property type="project" value="GO_Central"/>
</dbReference>
<dbReference type="GO" id="GO:0007268">
    <property type="term" value="P:chemical synaptic transmission"/>
    <property type="evidence" value="ECO:0000304"/>
    <property type="project" value="ProtInc"/>
</dbReference>
<dbReference type="GO" id="GO:0042755">
    <property type="term" value="P:eating behavior"/>
    <property type="evidence" value="ECO:0000318"/>
    <property type="project" value="GO_Central"/>
</dbReference>
<dbReference type="GO" id="GO:0060079">
    <property type="term" value="P:excitatory postsynaptic potential"/>
    <property type="evidence" value="ECO:0007669"/>
    <property type="project" value="Ensembl"/>
</dbReference>
<dbReference type="GO" id="GO:0008156">
    <property type="term" value="P:negative regulation of DNA replication"/>
    <property type="evidence" value="ECO:0007669"/>
    <property type="project" value="Ensembl"/>
</dbReference>
<dbReference type="GO" id="GO:0043267">
    <property type="term" value="P:negative regulation of potassium ion transport"/>
    <property type="evidence" value="ECO:0007669"/>
    <property type="project" value="Ensembl"/>
</dbReference>
<dbReference type="GO" id="GO:0051970">
    <property type="term" value="P:negative regulation of transmission of nerve impulse"/>
    <property type="evidence" value="ECO:0007669"/>
    <property type="project" value="Ensembl"/>
</dbReference>
<dbReference type="GO" id="GO:0007218">
    <property type="term" value="P:neuropeptide signaling pathway"/>
    <property type="evidence" value="ECO:0007669"/>
    <property type="project" value="UniProtKB-KW"/>
</dbReference>
<dbReference type="GO" id="GO:0007200">
    <property type="term" value="P:phospholipase C-activating G protein-coupled receptor signaling pathway"/>
    <property type="evidence" value="ECO:0007669"/>
    <property type="project" value="Ensembl"/>
</dbReference>
<dbReference type="GO" id="GO:0051928">
    <property type="term" value="P:positive regulation of calcium ion transport"/>
    <property type="evidence" value="ECO:0007669"/>
    <property type="project" value="Ensembl"/>
</dbReference>
<dbReference type="GO" id="GO:0120162">
    <property type="term" value="P:positive regulation of cold-induced thermogenesis"/>
    <property type="evidence" value="ECO:0000250"/>
    <property type="project" value="YuBioLab"/>
</dbReference>
<dbReference type="GO" id="GO:0007204">
    <property type="term" value="P:positive regulation of cytosolic calcium ion concentration"/>
    <property type="evidence" value="ECO:0007669"/>
    <property type="project" value="Ensembl"/>
</dbReference>
<dbReference type="GO" id="GO:0051971">
    <property type="term" value="P:positive regulation of transmission of nerve impulse"/>
    <property type="evidence" value="ECO:0000318"/>
    <property type="project" value="GO_Central"/>
</dbReference>
<dbReference type="GO" id="GO:0046928">
    <property type="term" value="P:regulation of neurotransmitter secretion"/>
    <property type="evidence" value="ECO:0000318"/>
    <property type="project" value="GO_Central"/>
</dbReference>
<dbReference type="GO" id="GO:0097305">
    <property type="term" value="P:response to alcohol"/>
    <property type="evidence" value="ECO:0007669"/>
    <property type="project" value="Ensembl"/>
</dbReference>
<dbReference type="GO" id="GO:0042594">
    <property type="term" value="P:response to starvation"/>
    <property type="evidence" value="ECO:0000318"/>
    <property type="project" value="GO_Central"/>
</dbReference>
<dbReference type="GO" id="GO:0030431">
    <property type="term" value="P:sleep"/>
    <property type="evidence" value="ECO:0000318"/>
    <property type="project" value="GO_Central"/>
</dbReference>
<dbReference type="GO" id="GO:0001659">
    <property type="term" value="P:temperature homeostasis"/>
    <property type="evidence" value="ECO:0000318"/>
    <property type="project" value="GO_Central"/>
</dbReference>
<dbReference type="InterPro" id="IPR001704">
    <property type="entry name" value="Orexin"/>
</dbReference>
<dbReference type="PANTHER" id="PTHR15173:SF2">
    <property type="entry name" value="HYPOCRETIN NEUROPEPTIDE PRECURSOR"/>
    <property type="match status" value="1"/>
</dbReference>
<dbReference type="PANTHER" id="PTHR15173">
    <property type="entry name" value="OREXIN"/>
    <property type="match status" value="1"/>
</dbReference>
<dbReference type="Pfam" id="PF02072">
    <property type="entry name" value="Orexin"/>
    <property type="match status" value="1"/>
</dbReference>
<dbReference type="PIRSF" id="PIRSF037824">
    <property type="entry name" value="Orexin"/>
    <property type="match status" value="1"/>
</dbReference>
<dbReference type="PRINTS" id="PR01091">
    <property type="entry name" value="OREXINPP"/>
</dbReference>
<sequence length="131" mass="13363">MNLPSTKVSWAAVTLLLLLLLLPPALLSSGAAAQPLPDCCRQKTCSCRLYELLHGAGNHAAGILTLGKRRSGPPGLQGRLQRLLQASGNHAAGILTMGRRAGAEPAPRPCLGRRCSAPAAASVAPGGQSGI</sequence>
<accession>O43612</accession>
<protein>
    <recommendedName>
        <fullName evidence="10">Hypocretin neuropeptide precursor</fullName>
    </recommendedName>
    <alternativeName>
        <fullName evidence="7">Hypocretin</fullName>
        <shortName evidence="7">Hcrt</shortName>
    </alternativeName>
    <alternativeName>
        <fullName evidence="8">Orexin precursor</fullName>
    </alternativeName>
    <alternativeName>
        <fullName evidence="8">Prepro-orexin</fullName>
    </alternativeName>
    <alternativeName>
        <fullName evidence="1">Preprohypocretin</fullName>
    </alternativeName>
    <component>
        <recommendedName>
            <fullName evidence="8">Orexin-A</fullName>
        </recommendedName>
        <alternativeName>
            <fullName evidence="6">Hypocretin-1</fullName>
            <shortName evidence="9">Hcrt1</shortName>
        </alternativeName>
    </component>
    <component>
        <recommendedName>
            <fullName evidence="8">Orexin-B</fullName>
        </recommendedName>
        <alternativeName>
            <fullName evidence="6">Hypocretin-2</fullName>
            <shortName evidence="9">Hcrt2</shortName>
        </alternativeName>
    </component>
</protein>
<evidence type="ECO:0000250" key="1">
    <source>
        <dbReference type="UniProtKB" id="O55232"/>
    </source>
</evidence>
<evidence type="ECO:0000269" key="2">
    <source>
    </source>
</evidence>
<evidence type="ECO:0000269" key="3">
    <source>
    </source>
</evidence>
<evidence type="ECO:0000269" key="4">
    <source>
    </source>
</evidence>
<evidence type="ECO:0000269" key="5">
    <source>
    </source>
</evidence>
<evidence type="ECO:0000303" key="6">
    <source>
    </source>
</evidence>
<evidence type="ECO:0000303" key="7">
    <source>
    </source>
</evidence>
<evidence type="ECO:0000303" key="8">
    <source>
    </source>
</evidence>
<evidence type="ECO:0000305" key="9"/>
<evidence type="ECO:0000312" key="10">
    <source>
        <dbReference type="HGNC" id="HGNC:4847"/>
    </source>
</evidence>
<evidence type="ECO:0000312" key="11">
    <source>
        <dbReference type="PDB" id="1R02"/>
    </source>
</evidence>
<evidence type="ECO:0000312" key="12">
    <source>
        <dbReference type="PDB" id="1WSO"/>
    </source>
</evidence>
<evidence type="ECO:0007744" key="13">
    <source>
        <dbReference type="PDB" id="7L1U"/>
    </source>
</evidence>
<evidence type="ECO:0007829" key="14">
    <source>
        <dbReference type="PDB" id="1CQ0"/>
    </source>
</evidence>
<evidence type="ECO:0007829" key="15">
    <source>
        <dbReference type="PDB" id="1R02"/>
    </source>
</evidence>